<name>AUP1_XENLA</name>
<organism>
    <name type="scientific">Xenopus laevis</name>
    <name type="common">African clawed frog</name>
    <dbReference type="NCBI Taxonomy" id="8355"/>
    <lineage>
        <taxon>Eukaryota</taxon>
        <taxon>Metazoa</taxon>
        <taxon>Chordata</taxon>
        <taxon>Craniata</taxon>
        <taxon>Vertebrata</taxon>
        <taxon>Euteleostomi</taxon>
        <taxon>Amphibia</taxon>
        <taxon>Batrachia</taxon>
        <taxon>Anura</taxon>
        <taxon>Pipoidea</taxon>
        <taxon>Pipidae</taxon>
        <taxon>Xenopodinae</taxon>
        <taxon>Xenopus</taxon>
        <taxon>Xenopus</taxon>
    </lineage>
</organism>
<evidence type="ECO:0000250" key="1">
    <source>
        <dbReference type="UniProtKB" id="Q9Y679"/>
    </source>
</evidence>
<evidence type="ECO:0000255" key="2">
    <source>
        <dbReference type="PROSITE-ProRule" id="PRU00468"/>
    </source>
</evidence>
<evidence type="ECO:0000256" key="3">
    <source>
        <dbReference type="SAM" id="MobiDB-lite"/>
    </source>
</evidence>
<evidence type="ECO:0000305" key="4"/>
<accession>B1H1N7</accession>
<accession>A1L2U0</accession>
<feature type="chain" id="PRO_0000359872" description="Lipid droplet-regulating VLDL assembly factor AUP1">
    <location>
        <begin position="1"/>
        <end position="399"/>
    </location>
</feature>
<feature type="topological domain" description="Cytoplasmic" evidence="1">
    <location>
        <begin position="1"/>
        <end position="21"/>
    </location>
</feature>
<feature type="intramembrane region" evidence="1">
    <location>
        <begin position="22"/>
        <end position="42"/>
    </location>
</feature>
<feature type="topological domain" description="Cytoplasmic" evidence="1">
    <location>
        <begin position="43"/>
        <end position="399"/>
    </location>
</feature>
<feature type="domain" description="CUE" evidence="2">
    <location>
        <begin position="284"/>
        <end position="326"/>
    </location>
</feature>
<feature type="region of interest" description="Disordered" evidence="3">
    <location>
        <begin position="332"/>
        <end position="364"/>
    </location>
</feature>
<feature type="sequence conflict" description="In Ref. 1; AAI29706." evidence="4" ref="1">
    <original>F</original>
    <variation>C</variation>
    <location>
        <position position="20"/>
    </location>
</feature>
<feature type="sequence conflict" description="In Ref. 1; AAI29706." evidence="4" ref="1">
    <original>R</original>
    <variation>M</variation>
    <location>
        <position position="85"/>
    </location>
</feature>
<feature type="sequence conflict" description="In Ref. 1; AAI29706." evidence="4" ref="1">
    <location>
        <position position="331"/>
    </location>
</feature>
<comment type="function">
    <text evidence="1">Plays a role in the translocation of terminally misfolded proteins from the endoplasmic reticulum lumen to the cytoplasm and their degradation by the proteasome (By similarity). Plays a role in lipid droplet formation (By similarity). Induces lipid droplet clustering (By similarity).</text>
</comment>
<comment type="subcellular location">
    <subcellularLocation>
        <location evidence="1">Endoplasmic reticulum membrane</location>
        <topology evidence="1">Peripheral membrane protein</topology>
    </subcellularLocation>
    <subcellularLocation>
        <location evidence="1">Lipid droplet</location>
    </subcellularLocation>
</comment>
<comment type="similarity">
    <text evidence="4">Belongs to the AUP1 family.</text>
</comment>
<comment type="sequence caution" evidence="4">
    <conflict type="erroneous initiation">
        <sequence resource="EMBL-CDS" id="AAI29706"/>
    </conflict>
</comment>
<protein>
    <recommendedName>
        <fullName evidence="1">Lipid droplet-regulating VLDL assembly factor AUP1</fullName>
    </recommendedName>
    <alternativeName>
        <fullName evidence="1">Ancient ubiquitous protein 1</fullName>
    </alternativeName>
</protein>
<sequence length="399" mass="44817">MEQPSLESMLELQRFPRNPFSLVLLLLYFPFGLCLFLIRLFIGAHVFLVSCVLPDSVFRRILLRVMSSVLGVYVSHSELRPWDQRGKILICNHRTAFDHSVISRIAPCCSPSVSCAPGFLCWARGFLELGALGSRTQLMESLKHYLSQPGGAPLLLFPEEDTTNGRTGLLHFSSWPFSLSDSVQPLSLTVQRPLIAVAVSGCSWVTELFWLLFIPFTVYQVRWLPSVCRLPRESDEDFACRVQQIVSLSLGVVATRHTAADRAEYVKRRRCELPAPKSQPLSPTHIQMAQHVKEVLPQVPLSAIHRDLGHTGCVDTTITNFLEGRVTFVAEEEETTGAAEGTSKSRVSRPLPQGFAKKPEDRHLSLQDRKQILYECARRKYLEKFGSVPGEEEEEGARG</sequence>
<dbReference type="EMBL" id="BC129705">
    <property type="protein sequence ID" value="AAI29706.1"/>
    <property type="status" value="ALT_INIT"/>
    <property type="molecule type" value="mRNA"/>
</dbReference>
<dbReference type="EMBL" id="BC160678">
    <property type="protein sequence ID" value="AAI60678.1"/>
    <property type="molecule type" value="mRNA"/>
</dbReference>
<dbReference type="RefSeq" id="NP_001116255.1">
    <property type="nucleotide sequence ID" value="NM_001122783.1"/>
</dbReference>
<dbReference type="SMR" id="B1H1N7"/>
<dbReference type="GeneID" id="100036951"/>
<dbReference type="KEGG" id="xla:100036951"/>
<dbReference type="AGR" id="Xenbase:XB-GENE-6255853"/>
<dbReference type="CTD" id="100036951"/>
<dbReference type="Xenbase" id="XB-GENE-6255853">
    <property type="gene designation" value="aup1.S"/>
</dbReference>
<dbReference type="OrthoDB" id="1854593at2759"/>
<dbReference type="Proteomes" id="UP000186698">
    <property type="component" value="Chromosome 1S"/>
</dbReference>
<dbReference type="Bgee" id="100036951">
    <property type="expression patterns" value="Expressed in pancreas and 19 other cell types or tissues"/>
</dbReference>
<dbReference type="GO" id="GO:0005789">
    <property type="term" value="C:endoplasmic reticulum membrane"/>
    <property type="evidence" value="ECO:0000250"/>
    <property type="project" value="UniProtKB"/>
</dbReference>
<dbReference type="GO" id="GO:0005811">
    <property type="term" value="C:lipid droplet"/>
    <property type="evidence" value="ECO:0000250"/>
    <property type="project" value="UniProtKB"/>
</dbReference>
<dbReference type="GO" id="GO:0016746">
    <property type="term" value="F:acyltransferase activity"/>
    <property type="evidence" value="ECO:0007669"/>
    <property type="project" value="InterPro"/>
</dbReference>
<dbReference type="GO" id="GO:0043130">
    <property type="term" value="F:ubiquitin binding"/>
    <property type="evidence" value="ECO:0007669"/>
    <property type="project" value="InterPro"/>
</dbReference>
<dbReference type="GO" id="GO:0036503">
    <property type="term" value="P:ERAD pathway"/>
    <property type="evidence" value="ECO:0000250"/>
    <property type="project" value="UniProtKB"/>
</dbReference>
<dbReference type="GO" id="GO:0140042">
    <property type="term" value="P:lipid droplet formation"/>
    <property type="evidence" value="ECO:0000250"/>
    <property type="project" value="UniProtKB"/>
</dbReference>
<dbReference type="GO" id="GO:0034389">
    <property type="term" value="P:lipid droplet organization"/>
    <property type="evidence" value="ECO:0000250"/>
    <property type="project" value="UniProtKB"/>
</dbReference>
<dbReference type="GO" id="GO:1990044">
    <property type="term" value="P:protein localization to lipid droplet"/>
    <property type="evidence" value="ECO:0000250"/>
    <property type="project" value="UniProtKB"/>
</dbReference>
<dbReference type="CDD" id="cd14420">
    <property type="entry name" value="CUE_AUP1"/>
    <property type="match status" value="1"/>
</dbReference>
<dbReference type="FunFam" id="1.10.8.10:FF:000049">
    <property type="entry name" value="ancient ubiquitous protein 1 isoform X2"/>
    <property type="match status" value="1"/>
</dbReference>
<dbReference type="Gene3D" id="1.10.8.10">
    <property type="entry name" value="DNA helicase RuvA subunit, C-terminal domain"/>
    <property type="match status" value="1"/>
</dbReference>
<dbReference type="InterPro" id="IPR048056">
    <property type="entry name" value="AUP1_CUE"/>
</dbReference>
<dbReference type="InterPro" id="IPR003892">
    <property type="entry name" value="CUE"/>
</dbReference>
<dbReference type="InterPro" id="IPR002123">
    <property type="entry name" value="Plipid/glycerol_acylTrfase"/>
</dbReference>
<dbReference type="PANTHER" id="PTHR15486">
    <property type="entry name" value="ANCIENT UBIQUITOUS PROTEIN"/>
    <property type="match status" value="1"/>
</dbReference>
<dbReference type="PANTHER" id="PTHR15486:SF96">
    <property type="entry name" value="LIPID DROPLET-REGULATING VLDL ASSEMBLY FACTOR AUP1"/>
    <property type="match status" value="1"/>
</dbReference>
<dbReference type="Pfam" id="PF02845">
    <property type="entry name" value="CUE"/>
    <property type="match status" value="1"/>
</dbReference>
<dbReference type="SMART" id="SM00546">
    <property type="entry name" value="CUE"/>
    <property type="match status" value="1"/>
</dbReference>
<dbReference type="SMART" id="SM00563">
    <property type="entry name" value="PlsC"/>
    <property type="match status" value="1"/>
</dbReference>
<dbReference type="SUPFAM" id="SSF69593">
    <property type="entry name" value="Glycerol-3-phosphate (1)-acyltransferase"/>
    <property type="match status" value="1"/>
</dbReference>
<dbReference type="PROSITE" id="PS51140">
    <property type="entry name" value="CUE"/>
    <property type="match status" value="1"/>
</dbReference>
<keyword id="KW-0256">Endoplasmic reticulum</keyword>
<keyword id="KW-0551">Lipid droplet</keyword>
<keyword id="KW-0472">Membrane</keyword>
<keyword id="KW-1185">Reference proteome</keyword>
<reference key="1">
    <citation type="submission" date="2008-03" db="EMBL/GenBank/DDBJ databases">
        <authorList>
            <consortium name="NIH - Xenopus Gene Collection (XGC) project"/>
        </authorList>
    </citation>
    <scope>NUCLEOTIDE SEQUENCE [LARGE SCALE MRNA]</scope>
    <source>
        <tissue>Embryo</tissue>
        <tissue>Thymocyte</tissue>
    </source>
</reference>
<proteinExistence type="evidence at transcript level"/>
<gene>
    <name evidence="1" type="primary">aup1</name>
</gene>